<reference key="1">
    <citation type="journal article" date="2011" name="J. Bacteriol.">
        <title>Comparative genomics of 28 Salmonella enterica isolates: evidence for CRISPR-mediated adaptive sublineage evolution.</title>
        <authorList>
            <person name="Fricke W.F."/>
            <person name="Mammel M.K."/>
            <person name="McDermott P.F."/>
            <person name="Tartera C."/>
            <person name="White D.G."/>
            <person name="Leclerc J.E."/>
            <person name="Ravel J."/>
            <person name="Cebula T.A."/>
        </authorList>
    </citation>
    <scope>NUCLEOTIDE SEQUENCE [LARGE SCALE GENOMIC DNA]</scope>
    <source>
        <strain>SL254</strain>
    </source>
</reference>
<evidence type="ECO:0000255" key="1">
    <source>
        <dbReference type="HAMAP-Rule" id="MF_00065"/>
    </source>
</evidence>
<feature type="chain" id="PRO_1000092249" description="Adenylyl-sulfate kinase">
    <location>
        <begin position="1"/>
        <end position="201"/>
    </location>
</feature>
<feature type="active site" description="Phosphoserine intermediate" evidence="1">
    <location>
        <position position="109"/>
    </location>
</feature>
<feature type="binding site" evidence="1">
    <location>
        <begin position="35"/>
        <end position="42"/>
    </location>
    <ligand>
        <name>ATP</name>
        <dbReference type="ChEBI" id="CHEBI:30616"/>
    </ligand>
</feature>
<gene>
    <name evidence="1" type="primary">cysC</name>
    <name type="ordered locus">SNSL254_A3139</name>
</gene>
<sequence length="201" mass="22385">MALHDENVVWHSHPVTVAAREQLHGHRGVVLWFTGLSGSGKSTVAGALEEALHQRGVSTYLLDGDNVRHGLCRDLGFSDADRQENIRRVGEVASLMADAGLIVLTAFISPHRAERQLVKERVGHDRFIEIYVNTPLAICEQRDPKGLYKKARAGELRNFTGIDAIYEAPDSPQVHLNGEQLVTNLVSQLLDLLRRRDIIRS</sequence>
<accession>B4T460</accession>
<dbReference type="EC" id="2.7.1.25" evidence="1"/>
<dbReference type="EMBL" id="CP001113">
    <property type="protein sequence ID" value="ACF65208.1"/>
    <property type="molecule type" value="Genomic_DNA"/>
</dbReference>
<dbReference type="RefSeq" id="WP_001173663.1">
    <property type="nucleotide sequence ID" value="NZ_CCMR01000001.1"/>
</dbReference>
<dbReference type="SMR" id="B4T460"/>
<dbReference type="KEGG" id="see:SNSL254_A3139"/>
<dbReference type="HOGENOM" id="CLU_046932_1_0_6"/>
<dbReference type="UniPathway" id="UPA00140">
    <property type="reaction ID" value="UER00205"/>
</dbReference>
<dbReference type="Proteomes" id="UP000008824">
    <property type="component" value="Chromosome"/>
</dbReference>
<dbReference type="GO" id="GO:0004020">
    <property type="term" value="F:adenylylsulfate kinase activity"/>
    <property type="evidence" value="ECO:0007669"/>
    <property type="project" value="UniProtKB-UniRule"/>
</dbReference>
<dbReference type="GO" id="GO:0005524">
    <property type="term" value="F:ATP binding"/>
    <property type="evidence" value="ECO:0007669"/>
    <property type="project" value="UniProtKB-UniRule"/>
</dbReference>
<dbReference type="GO" id="GO:0070814">
    <property type="term" value="P:hydrogen sulfide biosynthetic process"/>
    <property type="evidence" value="ECO:0007669"/>
    <property type="project" value="UniProtKB-UniRule"/>
</dbReference>
<dbReference type="GO" id="GO:0000103">
    <property type="term" value="P:sulfate assimilation"/>
    <property type="evidence" value="ECO:0007669"/>
    <property type="project" value="UniProtKB-UniRule"/>
</dbReference>
<dbReference type="CDD" id="cd02027">
    <property type="entry name" value="APSK"/>
    <property type="match status" value="1"/>
</dbReference>
<dbReference type="FunFam" id="3.40.50.300:FF:000212">
    <property type="entry name" value="Adenylyl-sulfate kinase"/>
    <property type="match status" value="1"/>
</dbReference>
<dbReference type="Gene3D" id="3.40.50.300">
    <property type="entry name" value="P-loop containing nucleotide triphosphate hydrolases"/>
    <property type="match status" value="1"/>
</dbReference>
<dbReference type="HAMAP" id="MF_00065">
    <property type="entry name" value="Adenylyl_sulf_kinase"/>
    <property type="match status" value="1"/>
</dbReference>
<dbReference type="InterPro" id="IPR002891">
    <property type="entry name" value="APS_kinase"/>
</dbReference>
<dbReference type="InterPro" id="IPR027417">
    <property type="entry name" value="P-loop_NTPase"/>
</dbReference>
<dbReference type="NCBIfam" id="TIGR00455">
    <property type="entry name" value="apsK"/>
    <property type="match status" value="1"/>
</dbReference>
<dbReference type="NCBIfam" id="NF003013">
    <property type="entry name" value="PRK03846.1"/>
    <property type="match status" value="1"/>
</dbReference>
<dbReference type="PANTHER" id="PTHR11055:SF63">
    <property type="entry name" value="ADENYLYL-SULFATE KINASE 1, CHLOROPLASTIC"/>
    <property type="match status" value="1"/>
</dbReference>
<dbReference type="PANTHER" id="PTHR11055">
    <property type="entry name" value="BIFUNCTIONAL 3'-PHOSPHOADENOSINE 5'-PHOSPHOSULFATE SYNTHASE"/>
    <property type="match status" value="1"/>
</dbReference>
<dbReference type="Pfam" id="PF01583">
    <property type="entry name" value="APS_kinase"/>
    <property type="match status" value="1"/>
</dbReference>
<dbReference type="SUPFAM" id="SSF52540">
    <property type="entry name" value="P-loop containing nucleoside triphosphate hydrolases"/>
    <property type="match status" value="1"/>
</dbReference>
<name>CYSC_SALNS</name>
<protein>
    <recommendedName>
        <fullName evidence="1">Adenylyl-sulfate kinase</fullName>
        <ecNumber evidence="1">2.7.1.25</ecNumber>
    </recommendedName>
    <alternativeName>
        <fullName evidence="1">APS kinase</fullName>
    </alternativeName>
    <alternativeName>
        <fullName evidence="1">ATP adenosine-5'-phosphosulfate 3'-phosphotransferase</fullName>
    </alternativeName>
    <alternativeName>
        <fullName evidence="1">Adenosine-5'-phosphosulfate kinase</fullName>
    </alternativeName>
</protein>
<keyword id="KW-0067">ATP-binding</keyword>
<keyword id="KW-0418">Kinase</keyword>
<keyword id="KW-0547">Nucleotide-binding</keyword>
<keyword id="KW-0597">Phosphoprotein</keyword>
<keyword id="KW-0808">Transferase</keyword>
<proteinExistence type="inferred from homology"/>
<organism>
    <name type="scientific">Salmonella newport (strain SL254)</name>
    <dbReference type="NCBI Taxonomy" id="423368"/>
    <lineage>
        <taxon>Bacteria</taxon>
        <taxon>Pseudomonadati</taxon>
        <taxon>Pseudomonadota</taxon>
        <taxon>Gammaproteobacteria</taxon>
        <taxon>Enterobacterales</taxon>
        <taxon>Enterobacteriaceae</taxon>
        <taxon>Salmonella</taxon>
    </lineage>
</organism>
<comment type="function">
    <text evidence="1">Catalyzes the synthesis of activated sulfate.</text>
</comment>
<comment type="catalytic activity">
    <reaction evidence="1">
        <text>adenosine 5'-phosphosulfate + ATP = 3'-phosphoadenylyl sulfate + ADP + H(+)</text>
        <dbReference type="Rhea" id="RHEA:24152"/>
        <dbReference type="ChEBI" id="CHEBI:15378"/>
        <dbReference type="ChEBI" id="CHEBI:30616"/>
        <dbReference type="ChEBI" id="CHEBI:58243"/>
        <dbReference type="ChEBI" id="CHEBI:58339"/>
        <dbReference type="ChEBI" id="CHEBI:456216"/>
        <dbReference type="EC" id="2.7.1.25"/>
    </reaction>
</comment>
<comment type="pathway">
    <text evidence="1">Sulfur metabolism; hydrogen sulfide biosynthesis; sulfite from sulfate: step 2/3.</text>
</comment>
<comment type="similarity">
    <text evidence="1">Belongs to the APS kinase family.</text>
</comment>